<reference key="1">
    <citation type="journal article" date="2002" name="Proc. Natl. Acad. Sci. U.S.A.">
        <title>Comparative genomic analysis in the region of a major Plasmodium-refractoriness locus of Anopheles gambiae.</title>
        <authorList>
            <person name="Thomasova D."/>
            <person name="Ton L.Q."/>
            <person name="Copley R.R."/>
            <person name="Zdobnov E.M."/>
            <person name="Wang X."/>
            <person name="Hong Y.S."/>
            <person name="Sim C."/>
            <person name="Bork P."/>
            <person name="Kafatos F.C."/>
            <person name="Collins F.H."/>
        </authorList>
    </citation>
    <scope>NUCLEOTIDE SEQUENCE [GENOMIC DNA]</scope>
    <source>
        <strain>PEST</strain>
    </source>
</reference>
<reference key="2">
    <citation type="journal article" date="2002" name="Science">
        <title>The genome sequence of the malaria mosquito Anopheles gambiae.</title>
        <authorList>
            <person name="Holt R.A."/>
            <person name="Subramanian G.M."/>
            <person name="Halpern A."/>
            <person name="Sutton G.G."/>
            <person name="Charlab R."/>
            <person name="Nusskern D.R."/>
            <person name="Wincker P."/>
            <person name="Clark A.G."/>
            <person name="Ribeiro J.M.C."/>
            <person name="Wides R."/>
            <person name="Salzberg S.L."/>
            <person name="Loftus B.J."/>
            <person name="Yandell M.D."/>
            <person name="Majoros W.H."/>
            <person name="Rusch D.B."/>
            <person name="Lai Z."/>
            <person name="Kraft C.L."/>
            <person name="Abril J.F."/>
            <person name="Anthouard V."/>
            <person name="Arensburger P."/>
            <person name="Atkinson P.W."/>
            <person name="Baden H."/>
            <person name="de Berardinis V."/>
            <person name="Baldwin D."/>
            <person name="Benes V."/>
            <person name="Biedler J."/>
            <person name="Blass C."/>
            <person name="Bolanos R."/>
            <person name="Boscus D."/>
            <person name="Barnstead M."/>
            <person name="Cai S."/>
            <person name="Center A."/>
            <person name="Chaturverdi K."/>
            <person name="Christophides G.K."/>
            <person name="Chrystal M.A.M."/>
            <person name="Clamp M."/>
            <person name="Cravchik A."/>
            <person name="Curwen V."/>
            <person name="Dana A."/>
            <person name="Delcher A."/>
            <person name="Dew I."/>
            <person name="Evans C.A."/>
            <person name="Flanigan M."/>
            <person name="Grundschober-Freimoser A."/>
            <person name="Friedli L."/>
            <person name="Gu Z."/>
            <person name="Guan P."/>
            <person name="Guigo R."/>
            <person name="Hillenmeyer M.E."/>
            <person name="Hladun S.L."/>
            <person name="Hogan J.R."/>
            <person name="Hong Y.S."/>
            <person name="Hoover J."/>
            <person name="Jaillon O."/>
            <person name="Ke Z."/>
            <person name="Kodira C.D."/>
            <person name="Kokoza E."/>
            <person name="Koutsos A."/>
            <person name="Letunic I."/>
            <person name="Levitsky A.A."/>
            <person name="Liang Y."/>
            <person name="Lin J.-J."/>
            <person name="Lobo N.F."/>
            <person name="Lopez J.R."/>
            <person name="Malek J.A."/>
            <person name="McIntosh T.C."/>
            <person name="Meister S."/>
            <person name="Miller J.R."/>
            <person name="Mobarry C."/>
            <person name="Mongin E."/>
            <person name="Murphy S.D."/>
            <person name="O'Brochta D.A."/>
            <person name="Pfannkoch C."/>
            <person name="Qi R."/>
            <person name="Regier M.A."/>
            <person name="Remington K."/>
            <person name="Shao H."/>
            <person name="Sharakhova M.V."/>
            <person name="Sitter C.D."/>
            <person name="Shetty J."/>
            <person name="Smith T.J."/>
            <person name="Strong R."/>
            <person name="Sun J."/>
            <person name="Thomasova D."/>
            <person name="Ton L.Q."/>
            <person name="Topalis P."/>
            <person name="Tu Z.J."/>
            <person name="Unger M.F."/>
            <person name="Walenz B."/>
            <person name="Wang A.H."/>
            <person name="Wang J."/>
            <person name="Wang M."/>
            <person name="Wang X."/>
            <person name="Woodford K.J."/>
            <person name="Wortman J.R."/>
            <person name="Wu M."/>
            <person name="Yao A."/>
            <person name="Zdobnov E.M."/>
            <person name="Zhang H."/>
            <person name="Zhao Q."/>
            <person name="Zhao S."/>
            <person name="Zhu S.C."/>
            <person name="Zhimulev I."/>
            <person name="Coluzzi M."/>
            <person name="della Torre A."/>
            <person name="Roth C.W."/>
            <person name="Louis C."/>
            <person name="Kalush F."/>
            <person name="Mural R.J."/>
            <person name="Myers E.W."/>
            <person name="Adams M.D."/>
            <person name="Smith H.O."/>
            <person name="Broder S."/>
            <person name="Gardner M.J."/>
            <person name="Fraser C.M."/>
            <person name="Birney E."/>
            <person name="Bork P."/>
            <person name="Brey P.T."/>
            <person name="Venter J.C."/>
            <person name="Weissenbach J."/>
            <person name="Kafatos F.C."/>
            <person name="Collins F.H."/>
            <person name="Hoffman S.L."/>
        </authorList>
    </citation>
    <scope>NUCLEOTIDE SEQUENCE [LARGE SCALE GENOMIC DNA]</scope>
    <source>
        <strain>PEST</strain>
    </source>
</reference>
<dbReference type="EC" id="5.3.1.23" evidence="1"/>
<dbReference type="EMBL" id="AJ439060">
    <property type="protein sequence ID" value="CAD27760.1"/>
    <property type="status" value="ALT_SEQ"/>
    <property type="molecule type" value="Genomic_DNA"/>
</dbReference>
<dbReference type="EMBL" id="AAAB01008987">
    <property type="protein sequence ID" value="EAA43149.1"/>
    <property type="molecule type" value="Genomic_DNA"/>
</dbReference>
<dbReference type="RefSeq" id="XP_321518.1">
    <property type="nucleotide sequence ID" value="XM_321518.4"/>
</dbReference>
<dbReference type="SMR" id="Q7PKS9"/>
<dbReference type="FunCoup" id="Q7PKS9">
    <property type="interactions" value="1731"/>
</dbReference>
<dbReference type="STRING" id="7165.Q7PKS9"/>
<dbReference type="PaxDb" id="7165-AGAP001589-PA"/>
<dbReference type="EnsemblMetazoa" id="AGAP001589-RA">
    <property type="protein sequence ID" value="AGAP001589-PA"/>
    <property type="gene ID" value="AGAP001589"/>
</dbReference>
<dbReference type="GeneID" id="1281584"/>
<dbReference type="KEGG" id="aga:1281584"/>
<dbReference type="VEuPathDB" id="VectorBase:AGAMI1_014521"/>
<dbReference type="VEuPathDB" id="VectorBase:AGAP001589"/>
<dbReference type="eggNOG" id="KOG1468">
    <property type="taxonomic scope" value="Eukaryota"/>
</dbReference>
<dbReference type="HOGENOM" id="CLU_016218_1_3_1"/>
<dbReference type="InParanoid" id="Q7PKS9"/>
<dbReference type="OMA" id="CETRPLN"/>
<dbReference type="PhylomeDB" id="Q7PKS9"/>
<dbReference type="UniPathway" id="UPA00904">
    <property type="reaction ID" value="UER00874"/>
</dbReference>
<dbReference type="Proteomes" id="UP000007062">
    <property type="component" value="Chromosome 2R"/>
</dbReference>
<dbReference type="GO" id="GO:0005737">
    <property type="term" value="C:cytoplasm"/>
    <property type="evidence" value="ECO:0007669"/>
    <property type="project" value="UniProtKB-SubCell"/>
</dbReference>
<dbReference type="GO" id="GO:0005634">
    <property type="term" value="C:nucleus"/>
    <property type="evidence" value="ECO:0007669"/>
    <property type="project" value="UniProtKB-SubCell"/>
</dbReference>
<dbReference type="GO" id="GO:0046523">
    <property type="term" value="F:S-methyl-5-thioribose-1-phosphate isomerase activity"/>
    <property type="evidence" value="ECO:0000318"/>
    <property type="project" value="GO_Central"/>
</dbReference>
<dbReference type="GO" id="GO:0019509">
    <property type="term" value="P:L-methionine salvage from methylthioadenosine"/>
    <property type="evidence" value="ECO:0000318"/>
    <property type="project" value="GO_Central"/>
</dbReference>
<dbReference type="FunFam" id="1.20.120.420:FF:000010">
    <property type="entry name" value="Methylthioribose-1-phosphate isomerase"/>
    <property type="match status" value="1"/>
</dbReference>
<dbReference type="FunFam" id="3.40.50.10470:FF:000003">
    <property type="entry name" value="Methylthioribose-1-phosphate isomerase"/>
    <property type="match status" value="1"/>
</dbReference>
<dbReference type="Gene3D" id="1.20.120.420">
    <property type="entry name" value="translation initiation factor eif-2b, domain 1"/>
    <property type="match status" value="1"/>
</dbReference>
<dbReference type="Gene3D" id="3.40.50.10470">
    <property type="entry name" value="Translation initiation factor eif-2b, domain 2"/>
    <property type="match status" value="1"/>
</dbReference>
<dbReference type="HAMAP" id="MF_01678">
    <property type="entry name" value="Salvage_MtnA"/>
    <property type="match status" value="1"/>
</dbReference>
<dbReference type="InterPro" id="IPR000649">
    <property type="entry name" value="IF-2B-related"/>
</dbReference>
<dbReference type="InterPro" id="IPR005251">
    <property type="entry name" value="IF-M1Pi"/>
</dbReference>
<dbReference type="InterPro" id="IPR042529">
    <property type="entry name" value="IF_2B-like_C"/>
</dbReference>
<dbReference type="InterPro" id="IPR011559">
    <property type="entry name" value="Initiation_fac_2B_a/b/d"/>
</dbReference>
<dbReference type="InterPro" id="IPR027363">
    <property type="entry name" value="M1Pi_N"/>
</dbReference>
<dbReference type="InterPro" id="IPR037171">
    <property type="entry name" value="NagB/RpiA_transferase-like"/>
</dbReference>
<dbReference type="NCBIfam" id="TIGR00524">
    <property type="entry name" value="eIF-2B_rel"/>
    <property type="match status" value="1"/>
</dbReference>
<dbReference type="NCBIfam" id="NF004326">
    <property type="entry name" value="PRK05720.1"/>
    <property type="match status" value="1"/>
</dbReference>
<dbReference type="NCBIfam" id="TIGR00512">
    <property type="entry name" value="salvage_mtnA"/>
    <property type="match status" value="1"/>
</dbReference>
<dbReference type="PANTHER" id="PTHR43475">
    <property type="entry name" value="METHYLTHIORIBOSE-1-PHOSPHATE ISOMERASE"/>
    <property type="match status" value="1"/>
</dbReference>
<dbReference type="PANTHER" id="PTHR43475:SF1">
    <property type="entry name" value="METHYLTHIORIBOSE-1-PHOSPHATE ISOMERASE"/>
    <property type="match status" value="1"/>
</dbReference>
<dbReference type="Pfam" id="PF01008">
    <property type="entry name" value="IF-2B"/>
    <property type="match status" value="1"/>
</dbReference>
<dbReference type="SUPFAM" id="SSF100950">
    <property type="entry name" value="NagB/RpiA/CoA transferase-like"/>
    <property type="match status" value="1"/>
</dbReference>
<proteinExistence type="inferred from homology"/>
<comment type="function">
    <text evidence="1">Catalyzes the interconversion of methylthioribose-1-phosphate (MTR-1-P) into methylthioribulose-1-phosphate (MTRu-1-P).</text>
</comment>
<comment type="catalytic activity">
    <reaction evidence="1">
        <text>5-(methylsulfanyl)-alpha-D-ribose 1-phosphate = 5-(methylsulfanyl)-D-ribulose 1-phosphate</text>
        <dbReference type="Rhea" id="RHEA:19989"/>
        <dbReference type="ChEBI" id="CHEBI:58533"/>
        <dbReference type="ChEBI" id="CHEBI:58548"/>
        <dbReference type="EC" id="5.3.1.23"/>
    </reaction>
</comment>
<comment type="pathway">
    <text evidence="1">Amino-acid biosynthesis; L-methionine biosynthesis via salvage pathway; L-methionine from S-methyl-5-thio-alpha-D-ribose 1-phosphate: step 1/6.</text>
</comment>
<comment type="subcellular location">
    <subcellularLocation>
        <location evidence="1">Cytoplasm</location>
    </subcellularLocation>
    <subcellularLocation>
        <location evidence="1">Nucleus</location>
    </subcellularLocation>
</comment>
<comment type="similarity">
    <text evidence="1">Belongs to the eIF-2B alpha/beta/delta subunits family. MtnA subfamily.</text>
</comment>
<comment type="sequence caution" evidence="2">
    <conflict type="erroneous gene model prediction">
        <sequence resource="EMBL-CDS" id="CAD27760"/>
    </conflict>
</comment>
<protein>
    <recommendedName>
        <fullName evidence="1">Methylthioribose-1-phosphate isomerase</fullName>
        <shortName evidence="1">M1Pi</shortName>
        <shortName evidence="1">MTR-1-P isomerase</shortName>
        <ecNumber evidence="1">5.3.1.23</ecNumber>
    </recommendedName>
    <alternativeName>
        <fullName evidence="1">S-methyl-5-thioribose-1-phosphate isomerase</fullName>
    </alternativeName>
    <alternativeName>
        <fullName evidence="1">Translation initiation factor eIF-2B subunit alpha/beta/delta-like protein</fullName>
    </alternativeName>
</protein>
<sequence>MTLEAIKYKSGQLQILDQLLLPAESKYIPVAGVKDGWSAIHKMQVRGAPAIAIVGCLSLVVEIYDKQYETKAALANEIGEHLQYLVTSRPTAVNLKLAADDVKGQVESLLANETVTVDGMKQEVIKAIEYMLEKDISDNRAIGDNGANVLVKGVDRPLKLLTHCNTGSLATAGYGTALGVIRSVNERNLLEHVYCTETRPYNQGARLTAYELVHDKLPATLVTDSMVAALLNSRKIDAIIVGADRVAANGDTANKIGTYQMAVVAKHHGVPFYVAAPFTSIDVAIEDGSHIKIEERPEHELTHIGGQRIAAPGIGCWNPAFDVTPAELITGIITERGVLKPCELAEKVRQK</sequence>
<organism>
    <name type="scientific">Anopheles gambiae</name>
    <name type="common">African malaria mosquito</name>
    <dbReference type="NCBI Taxonomy" id="7165"/>
    <lineage>
        <taxon>Eukaryota</taxon>
        <taxon>Metazoa</taxon>
        <taxon>Ecdysozoa</taxon>
        <taxon>Arthropoda</taxon>
        <taxon>Hexapoda</taxon>
        <taxon>Insecta</taxon>
        <taxon>Pterygota</taxon>
        <taxon>Neoptera</taxon>
        <taxon>Endopterygota</taxon>
        <taxon>Diptera</taxon>
        <taxon>Nematocera</taxon>
        <taxon>Culicoidea</taxon>
        <taxon>Culicidae</taxon>
        <taxon>Anophelinae</taxon>
        <taxon>Anopheles</taxon>
    </lineage>
</organism>
<feature type="chain" id="PRO_0000401973" description="Methylthioribose-1-phosphate isomerase">
    <location>
        <begin position="1"/>
        <end position="351"/>
    </location>
</feature>
<feature type="active site" description="Proton donor" evidence="1">
    <location>
        <position position="244"/>
    </location>
</feature>
<feature type="site" description="Transition state stabilizer" evidence="1">
    <location>
        <position position="164"/>
    </location>
</feature>
<name>MTNA_ANOGA</name>
<gene>
    <name type="ORF">AGAP001589</name>
</gene>
<evidence type="ECO:0000255" key="1">
    <source>
        <dbReference type="HAMAP-Rule" id="MF_03119"/>
    </source>
</evidence>
<evidence type="ECO:0000305" key="2"/>
<keyword id="KW-0028">Amino-acid biosynthesis</keyword>
<keyword id="KW-0963">Cytoplasm</keyword>
<keyword id="KW-0413">Isomerase</keyword>
<keyword id="KW-0486">Methionine biosynthesis</keyword>
<keyword id="KW-0539">Nucleus</keyword>
<keyword id="KW-1185">Reference proteome</keyword>
<accession>Q7PKS9</accession>
<accession>Q8T5K0</accession>